<protein>
    <recommendedName>
        <fullName>Zinc finger protein 367</fullName>
    </recommendedName>
</protein>
<proteinExistence type="evidence at transcript level"/>
<dbReference type="EMBL" id="BC093231">
    <property type="protein sequence ID" value="AAH93231.1"/>
    <property type="molecule type" value="mRNA"/>
</dbReference>
<dbReference type="RefSeq" id="NP_001017726.1">
    <property type="nucleotide sequence ID" value="NM_001017726.1"/>
</dbReference>
<dbReference type="SMR" id="Q567C6"/>
<dbReference type="FunCoup" id="Q567C6">
    <property type="interactions" value="915"/>
</dbReference>
<dbReference type="STRING" id="7955.ENSDARP00000007006"/>
<dbReference type="PaxDb" id="7955-ENSDARP00000007006"/>
<dbReference type="GeneID" id="550421"/>
<dbReference type="KEGG" id="dre:550421"/>
<dbReference type="AGR" id="ZFIN:ZDB-GENE-050417-231"/>
<dbReference type="CTD" id="195828"/>
<dbReference type="ZFIN" id="ZDB-GENE-050417-231">
    <property type="gene designation" value="znf367"/>
</dbReference>
<dbReference type="eggNOG" id="KOG1721">
    <property type="taxonomic scope" value="Eukaryota"/>
</dbReference>
<dbReference type="InParanoid" id="Q567C6"/>
<dbReference type="OrthoDB" id="3437960at2759"/>
<dbReference type="PhylomeDB" id="Q567C6"/>
<dbReference type="PRO" id="PR:Q567C6"/>
<dbReference type="Proteomes" id="UP000000437">
    <property type="component" value="Chromosome 8"/>
</dbReference>
<dbReference type="GO" id="GO:0005634">
    <property type="term" value="C:nucleus"/>
    <property type="evidence" value="ECO:0007669"/>
    <property type="project" value="UniProtKB-SubCell"/>
</dbReference>
<dbReference type="GO" id="GO:0003700">
    <property type="term" value="F:DNA-binding transcription factor activity"/>
    <property type="evidence" value="ECO:0000318"/>
    <property type="project" value="GO_Central"/>
</dbReference>
<dbReference type="GO" id="GO:0000978">
    <property type="term" value="F:RNA polymerase II cis-regulatory region sequence-specific DNA binding"/>
    <property type="evidence" value="ECO:0000318"/>
    <property type="project" value="GO_Central"/>
</dbReference>
<dbReference type="GO" id="GO:0008270">
    <property type="term" value="F:zinc ion binding"/>
    <property type="evidence" value="ECO:0007669"/>
    <property type="project" value="UniProtKB-KW"/>
</dbReference>
<dbReference type="GO" id="GO:0006357">
    <property type="term" value="P:regulation of transcription by RNA polymerase II"/>
    <property type="evidence" value="ECO:0000318"/>
    <property type="project" value="GO_Central"/>
</dbReference>
<dbReference type="FunFam" id="3.30.160.60:FF:000535">
    <property type="entry name" value="Zinc finger protein 367"/>
    <property type="match status" value="1"/>
</dbReference>
<dbReference type="FunFam" id="3.30.160.60:FF:000474">
    <property type="entry name" value="zinc finger protein 367"/>
    <property type="match status" value="1"/>
</dbReference>
<dbReference type="Gene3D" id="3.30.160.60">
    <property type="entry name" value="Classic Zinc Finger"/>
    <property type="match status" value="3"/>
</dbReference>
<dbReference type="InterPro" id="IPR036236">
    <property type="entry name" value="Znf_C2H2_sf"/>
</dbReference>
<dbReference type="InterPro" id="IPR013087">
    <property type="entry name" value="Znf_C2H2_type"/>
</dbReference>
<dbReference type="PANTHER" id="PTHR14003">
    <property type="entry name" value="TRANSCRIPTIONAL REPRESSOR PROTEIN YY"/>
    <property type="match status" value="1"/>
</dbReference>
<dbReference type="PANTHER" id="PTHR14003:SF26">
    <property type="entry name" value="ZINC FINGER PROTEIN 367"/>
    <property type="match status" value="1"/>
</dbReference>
<dbReference type="Pfam" id="PF00096">
    <property type="entry name" value="zf-C2H2"/>
    <property type="match status" value="1"/>
</dbReference>
<dbReference type="Pfam" id="PF13912">
    <property type="entry name" value="zf-C2H2_6"/>
    <property type="match status" value="1"/>
</dbReference>
<dbReference type="SMART" id="SM00355">
    <property type="entry name" value="ZnF_C2H2"/>
    <property type="match status" value="3"/>
</dbReference>
<dbReference type="SUPFAM" id="SSF57667">
    <property type="entry name" value="beta-beta-alpha zinc fingers"/>
    <property type="match status" value="1"/>
</dbReference>
<dbReference type="PROSITE" id="PS00028">
    <property type="entry name" value="ZINC_FINGER_C2H2_1"/>
    <property type="match status" value="2"/>
</dbReference>
<dbReference type="PROSITE" id="PS50157">
    <property type="entry name" value="ZINC_FINGER_C2H2_2"/>
    <property type="match status" value="2"/>
</dbReference>
<sequence length="316" mass="35180">MADSKHQVIFCNDSPKRVLVSVIKTTPIKPRTTADSLMPTSPGFSDFMVYPWRWGENAHNVTLGPGSGSGAASPTRTSSSPAEADPLSCPEHLKDGIRRGRPRADTVRELINEGENSTSRIRCNICNRVFPREKSLQAHKRTHTGERPYLCDYPDCGKAFVQSGQLKTHQRLHTGEKPFVCSEKACGSRFTHANRHCAKHPYARLKREEPTGGPGKSQGADNKAVAEWLTKYWQTREQRSPVPGKAKPQNKSPLEDQEQQDPLDFLPSDEGEEEEQEEEKNAPSGGVVTARRRLQEQRERLHGALALIELANNLSA</sequence>
<name>ZN367_DANRE</name>
<accession>Q567C6</accession>
<reference key="1">
    <citation type="submission" date="2005-04" db="EMBL/GenBank/DDBJ databases">
        <authorList>
            <consortium name="NIH - Zebrafish Gene Collection (ZGC) project"/>
        </authorList>
    </citation>
    <scope>NUCLEOTIDE SEQUENCE [LARGE SCALE MRNA]</scope>
    <source>
        <tissue>Larva</tissue>
    </source>
</reference>
<feature type="chain" id="PRO_0000285300" description="Zinc finger protein 367">
    <location>
        <begin position="1"/>
        <end position="316"/>
    </location>
</feature>
<feature type="zinc finger region" description="C2H2-type 1" evidence="3">
    <location>
        <begin position="121"/>
        <end position="143"/>
    </location>
</feature>
<feature type="zinc finger region" description="C2H2-type 2" evidence="3">
    <location>
        <begin position="149"/>
        <end position="173"/>
    </location>
</feature>
<feature type="region of interest" description="Disordered" evidence="4">
    <location>
        <begin position="61"/>
        <end position="97"/>
    </location>
</feature>
<feature type="region of interest" description="Disordered" evidence="4">
    <location>
        <begin position="234"/>
        <end position="294"/>
    </location>
</feature>
<feature type="coiled-coil region" evidence="2">
    <location>
        <begin position="289"/>
        <end position="313"/>
    </location>
</feature>
<feature type="compositionally biased region" description="Low complexity" evidence="4">
    <location>
        <begin position="70"/>
        <end position="82"/>
    </location>
</feature>
<feature type="compositionally biased region" description="Acidic residues" evidence="4">
    <location>
        <begin position="255"/>
        <end position="278"/>
    </location>
</feature>
<organism>
    <name type="scientific">Danio rerio</name>
    <name type="common">Zebrafish</name>
    <name type="synonym">Brachydanio rerio</name>
    <dbReference type="NCBI Taxonomy" id="7955"/>
    <lineage>
        <taxon>Eukaryota</taxon>
        <taxon>Metazoa</taxon>
        <taxon>Chordata</taxon>
        <taxon>Craniata</taxon>
        <taxon>Vertebrata</taxon>
        <taxon>Euteleostomi</taxon>
        <taxon>Actinopterygii</taxon>
        <taxon>Neopterygii</taxon>
        <taxon>Teleostei</taxon>
        <taxon>Ostariophysi</taxon>
        <taxon>Cypriniformes</taxon>
        <taxon>Danionidae</taxon>
        <taxon>Danioninae</taxon>
        <taxon>Danio</taxon>
    </lineage>
</organism>
<comment type="function">
    <text evidence="1">Transcriptional activator.</text>
</comment>
<comment type="subcellular location">
    <subcellularLocation>
        <location evidence="1">Nucleus</location>
    </subcellularLocation>
</comment>
<comment type="similarity">
    <text evidence="5">Belongs to the krueppel C2H2-type zinc-finger protein family.</text>
</comment>
<evidence type="ECO:0000250" key="1"/>
<evidence type="ECO:0000255" key="2"/>
<evidence type="ECO:0000255" key="3">
    <source>
        <dbReference type="PROSITE-ProRule" id="PRU00042"/>
    </source>
</evidence>
<evidence type="ECO:0000256" key="4">
    <source>
        <dbReference type="SAM" id="MobiDB-lite"/>
    </source>
</evidence>
<evidence type="ECO:0000305" key="5"/>
<gene>
    <name type="primary">znf367</name>
    <name type="ORF">zgc:112157</name>
</gene>
<keyword id="KW-0010">Activator</keyword>
<keyword id="KW-0175">Coiled coil</keyword>
<keyword id="KW-0238">DNA-binding</keyword>
<keyword id="KW-0479">Metal-binding</keyword>
<keyword id="KW-0539">Nucleus</keyword>
<keyword id="KW-1185">Reference proteome</keyword>
<keyword id="KW-0677">Repeat</keyword>
<keyword id="KW-0804">Transcription</keyword>
<keyword id="KW-0805">Transcription regulation</keyword>
<keyword id="KW-0862">Zinc</keyword>
<keyword id="KW-0863">Zinc-finger</keyword>